<evidence type="ECO:0000255" key="1">
    <source>
        <dbReference type="HAMAP-Rule" id="MF_01320"/>
    </source>
</evidence>
<evidence type="ECO:0000256" key="2">
    <source>
        <dbReference type="SAM" id="MobiDB-lite"/>
    </source>
</evidence>
<evidence type="ECO:0000305" key="3"/>
<proteinExistence type="inferred from homology"/>
<gene>
    <name evidence="1" type="primary">rplB</name>
    <name type="ordered locus">Mkms_1033</name>
</gene>
<comment type="function">
    <text evidence="1">One of the primary rRNA binding proteins. Required for association of the 30S and 50S subunits to form the 70S ribosome, for tRNA binding and peptide bond formation. It has been suggested to have peptidyltransferase activity; this is somewhat controversial. Makes several contacts with the 16S rRNA in the 70S ribosome.</text>
</comment>
<comment type="subunit">
    <text evidence="1">Part of the 50S ribosomal subunit. Forms a bridge to the 30S subunit in the 70S ribosome.</text>
</comment>
<comment type="similarity">
    <text evidence="1">Belongs to the universal ribosomal protein uL2 family.</text>
</comment>
<name>RL2_MYCSK</name>
<sequence>MAIRKYKPTTPGRRGASVSDFAEITRSTPEKSLVRPLHGKGGRNAHGRITTRHKGGGHKRAYRVIDFRRHDKDGVDAKVAHIEYDPNRTANIALLHYLDGEKRYIIAPYGLKQGAIVESGANADIKPGNNLPLRNIPAGTVIHAVELRPGGGAKLARSAGVSIQLLGKEGSYASLRMPSGEIRRVDVRCRATVGEVGNAEQANINWGKAGRMRWKGKRPTVRGVVMNPVDHPHGGGEGKTSGGRHPVSPWGKPEGRTRKPNKPSDKLIVRRRRTGKKR</sequence>
<dbReference type="EMBL" id="CP000518">
    <property type="protein sequence ID" value="ABL90247.1"/>
    <property type="molecule type" value="Genomic_DNA"/>
</dbReference>
<dbReference type="SMR" id="A1UBN9"/>
<dbReference type="STRING" id="189918.Mkms_1033"/>
<dbReference type="KEGG" id="mkm:Mkms_1033"/>
<dbReference type="HOGENOM" id="CLU_036235_2_1_11"/>
<dbReference type="OrthoDB" id="9778722at2"/>
<dbReference type="GO" id="GO:0015934">
    <property type="term" value="C:large ribosomal subunit"/>
    <property type="evidence" value="ECO:0007669"/>
    <property type="project" value="InterPro"/>
</dbReference>
<dbReference type="GO" id="GO:0019843">
    <property type="term" value="F:rRNA binding"/>
    <property type="evidence" value="ECO:0007669"/>
    <property type="project" value="UniProtKB-UniRule"/>
</dbReference>
<dbReference type="GO" id="GO:0003735">
    <property type="term" value="F:structural constituent of ribosome"/>
    <property type="evidence" value="ECO:0007669"/>
    <property type="project" value="InterPro"/>
</dbReference>
<dbReference type="GO" id="GO:0016740">
    <property type="term" value="F:transferase activity"/>
    <property type="evidence" value="ECO:0007669"/>
    <property type="project" value="InterPro"/>
</dbReference>
<dbReference type="GO" id="GO:0002181">
    <property type="term" value="P:cytoplasmic translation"/>
    <property type="evidence" value="ECO:0007669"/>
    <property type="project" value="TreeGrafter"/>
</dbReference>
<dbReference type="FunFam" id="2.30.30.30:FF:000001">
    <property type="entry name" value="50S ribosomal protein L2"/>
    <property type="match status" value="1"/>
</dbReference>
<dbReference type="FunFam" id="2.40.50.140:FF:000003">
    <property type="entry name" value="50S ribosomal protein L2"/>
    <property type="match status" value="1"/>
</dbReference>
<dbReference type="FunFam" id="4.10.950.10:FF:000001">
    <property type="entry name" value="50S ribosomal protein L2"/>
    <property type="match status" value="1"/>
</dbReference>
<dbReference type="Gene3D" id="2.30.30.30">
    <property type="match status" value="1"/>
</dbReference>
<dbReference type="Gene3D" id="2.40.50.140">
    <property type="entry name" value="Nucleic acid-binding proteins"/>
    <property type="match status" value="1"/>
</dbReference>
<dbReference type="Gene3D" id="4.10.950.10">
    <property type="entry name" value="Ribosomal protein L2, domain 3"/>
    <property type="match status" value="1"/>
</dbReference>
<dbReference type="HAMAP" id="MF_01320_B">
    <property type="entry name" value="Ribosomal_uL2_B"/>
    <property type="match status" value="1"/>
</dbReference>
<dbReference type="InterPro" id="IPR012340">
    <property type="entry name" value="NA-bd_OB-fold"/>
</dbReference>
<dbReference type="InterPro" id="IPR014722">
    <property type="entry name" value="Rib_uL2_dom2"/>
</dbReference>
<dbReference type="InterPro" id="IPR002171">
    <property type="entry name" value="Ribosomal_uL2"/>
</dbReference>
<dbReference type="InterPro" id="IPR005880">
    <property type="entry name" value="Ribosomal_uL2_bac/org-type"/>
</dbReference>
<dbReference type="InterPro" id="IPR022669">
    <property type="entry name" value="Ribosomal_uL2_C"/>
</dbReference>
<dbReference type="InterPro" id="IPR022671">
    <property type="entry name" value="Ribosomal_uL2_CS"/>
</dbReference>
<dbReference type="InterPro" id="IPR014726">
    <property type="entry name" value="Ribosomal_uL2_dom3"/>
</dbReference>
<dbReference type="InterPro" id="IPR022666">
    <property type="entry name" value="Ribosomal_uL2_RNA-bd_dom"/>
</dbReference>
<dbReference type="InterPro" id="IPR008991">
    <property type="entry name" value="Translation_prot_SH3-like_sf"/>
</dbReference>
<dbReference type="NCBIfam" id="TIGR01171">
    <property type="entry name" value="rplB_bact"/>
    <property type="match status" value="1"/>
</dbReference>
<dbReference type="PANTHER" id="PTHR13691:SF5">
    <property type="entry name" value="LARGE RIBOSOMAL SUBUNIT PROTEIN UL2M"/>
    <property type="match status" value="1"/>
</dbReference>
<dbReference type="PANTHER" id="PTHR13691">
    <property type="entry name" value="RIBOSOMAL PROTEIN L2"/>
    <property type="match status" value="1"/>
</dbReference>
<dbReference type="Pfam" id="PF00181">
    <property type="entry name" value="Ribosomal_L2"/>
    <property type="match status" value="1"/>
</dbReference>
<dbReference type="Pfam" id="PF03947">
    <property type="entry name" value="Ribosomal_L2_C"/>
    <property type="match status" value="1"/>
</dbReference>
<dbReference type="PIRSF" id="PIRSF002158">
    <property type="entry name" value="Ribosomal_L2"/>
    <property type="match status" value="1"/>
</dbReference>
<dbReference type="SMART" id="SM01383">
    <property type="entry name" value="Ribosomal_L2"/>
    <property type="match status" value="1"/>
</dbReference>
<dbReference type="SMART" id="SM01382">
    <property type="entry name" value="Ribosomal_L2_C"/>
    <property type="match status" value="1"/>
</dbReference>
<dbReference type="SUPFAM" id="SSF50249">
    <property type="entry name" value="Nucleic acid-binding proteins"/>
    <property type="match status" value="1"/>
</dbReference>
<dbReference type="SUPFAM" id="SSF50104">
    <property type="entry name" value="Translation proteins SH3-like domain"/>
    <property type="match status" value="1"/>
</dbReference>
<dbReference type="PROSITE" id="PS00467">
    <property type="entry name" value="RIBOSOMAL_L2"/>
    <property type="match status" value="1"/>
</dbReference>
<accession>A1UBN9</accession>
<keyword id="KW-0687">Ribonucleoprotein</keyword>
<keyword id="KW-0689">Ribosomal protein</keyword>
<keyword id="KW-0694">RNA-binding</keyword>
<keyword id="KW-0699">rRNA-binding</keyword>
<protein>
    <recommendedName>
        <fullName evidence="1">Large ribosomal subunit protein uL2</fullName>
    </recommendedName>
    <alternativeName>
        <fullName evidence="3">50S ribosomal protein L2</fullName>
    </alternativeName>
</protein>
<feature type="chain" id="PRO_0000309960" description="Large ribosomal subunit protein uL2">
    <location>
        <begin position="1"/>
        <end position="278"/>
    </location>
</feature>
<feature type="region of interest" description="Disordered" evidence="2">
    <location>
        <begin position="27"/>
        <end position="58"/>
    </location>
</feature>
<feature type="region of interest" description="Disordered" evidence="2">
    <location>
        <begin position="224"/>
        <end position="278"/>
    </location>
</feature>
<feature type="compositionally biased region" description="Basic residues" evidence="2">
    <location>
        <begin position="37"/>
        <end position="58"/>
    </location>
</feature>
<feature type="compositionally biased region" description="Basic and acidic residues" evidence="2">
    <location>
        <begin position="253"/>
        <end position="268"/>
    </location>
</feature>
<feature type="compositionally biased region" description="Basic residues" evidence="2">
    <location>
        <begin position="269"/>
        <end position="278"/>
    </location>
</feature>
<organism>
    <name type="scientific">Mycobacterium sp. (strain KMS)</name>
    <dbReference type="NCBI Taxonomy" id="189918"/>
    <lineage>
        <taxon>Bacteria</taxon>
        <taxon>Bacillati</taxon>
        <taxon>Actinomycetota</taxon>
        <taxon>Actinomycetes</taxon>
        <taxon>Mycobacteriales</taxon>
        <taxon>Mycobacteriaceae</taxon>
        <taxon>Mycobacterium</taxon>
    </lineage>
</organism>
<reference key="1">
    <citation type="submission" date="2006-12" db="EMBL/GenBank/DDBJ databases">
        <title>Complete sequence of chromosome of Mycobacterium sp. KMS.</title>
        <authorList>
            <consortium name="US DOE Joint Genome Institute"/>
            <person name="Copeland A."/>
            <person name="Lucas S."/>
            <person name="Lapidus A."/>
            <person name="Barry K."/>
            <person name="Detter J.C."/>
            <person name="Glavina del Rio T."/>
            <person name="Hammon N."/>
            <person name="Israni S."/>
            <person name="Dalin E."/>
            <person name="Tice H."/>
            <person name="Pitluck S."/>
            <person name="Kiss H."/>
            <person name="Brettin T."/>
            <person name="Bruce D."/>
            <person name="Han C."/>
            <person name="Tapia R."/>
            <person name="Gilna P."/>
            <person name="Schmutz J."/>
            <person name="Larimer F."/>
            <person name="Land M."/>
            <person name="Hauser L."/>
            <person name="Kyrpides N."/>
            <person name="Mikhailova N."/>
            <person name="Miller C.D."/>
            <person name="Richardson P."/>
        </authorList>
    </citation>
    <scope>NUCLEOTIDE SEQUENCE [LARGE SCALE GENOMIC DNA]</scope>
    <source>
        <strain>KMS</strain>
    </source>
</reference>